<proteinExistence type="inferred from homology"/>
<name>RL27_VESOH</name>
<reference key="1">
    <citation type="journal article" date="2007" name="Curr. Biol.">
        <title>Reduced genome of the thioautotrophic intracellular symbiont in a deep-sea clam, Calyptogena okutanii.</title>
        <authorList>
            <person name="Kuwahara H."/>
            <person name="Yoshida T."/>
            <person name="Takaki Y."/>
            <person name="Shimamura S."/>
            <person name="Nishi S."/>
            <person name="Harada M."/>
            <person name="Matsuyama K."/>
            <person name="Takishita K."/>
            <person name="Kawato M."/>
            <person name="Uematsu K."/>
            <person name="Fujiwara Y."/>
            <person name="Sato T."/>
            <person name="Kato C."/>
            <person name="Kitagawa M."/>
            <person name="Kato I."/>
            <person name="Maruyama T."/>
        </authorList>
    </citation>
    <scope>NUCLEOTIDE SEQUENCE [LARGE SCALE GENOMIC DNA]</scope>
    <source>
        <strain>HA</strain>
    </source>
</reference>
<sequence length="85" mass="9360">MAHKKAGGSTNNGRDSVSKRLGVKRFGGQVVLAGNILVRQRGTKFHPGTNVRKGKDDTLFATMDGRVVFSKKGKFMYQYISIEIT</sequence>
<organism>
    <name type="scientific">Vesicomyosocius okutanii subsp. Calyptogena okutanii (strain HA)</name>
    <dbReference type="NCBI Taxonomy" id="412965"/>
    <lineage>
        <taxon>Bacteria</taxon>
        <taxon>Pseudomonadati</taxon>
        <taxon>Pseudomonadota</taxon>
        <taxon>Gammaproteobacteria</taxon>
        <taxon>Candidatus Pseudothioglobaceae</taxon>
        <taxon>Candidatus Vesicomyosocius</taxon>
    </lineage>
</organism>
<accession>A5CVV8</accession>
<gene>
    <name evidence="1" type="primary">rpmA</name>
    <name type="ordered locus">COSY_0824</name>
</gene>
<keyword id="KW-1185">Reference proteome</keyword>
<keyword id="KW-0687">Ribonucleoprotein</keyword>
<keyword id="KW-0689">Ribosomal protein</keyword>
<comment type="similarity">
    <text evidence="1">Belongs to the bacterial ribosomal protein bL27 family.</text>
</comment>
<feature type="chain" id="PRO_1000017644" description="Large ribosomal subunit protein bL27">
    <location>
        <begin position="1"/>
        <end position="85"/>
    </location>
</feature>
<evidence type="ECO:0000255" key="1">
    <source>
        <dbReference type="HAMAP-Rule" id="MF_00539"/>
    </source>
</evidence>
<evidence type="ECO:0000305" key="2"/>
<protein>
    <recommendedName>
        <fullName evidence="1">Large ribosomal subunit protein bL27</fullName>
    </recommendedName>
    <alternativeName>
        <fullName evidence="2">50S ribosomal protein L27</fullName>
    </alternativeName>
</protein>
<dbReference type="EMBL" id="AP009247">
    <property type="protein sequence ID" value="BAF61930.1"/>
    <property type="molecule type" value="Genomic_DNA"/>
</dbReference>
<dbReference type="RefSeq" id="WP_011930199.1">
    <property type="nucleotide sequence ID" value="NC_009465.1"/>
</dbReference>
<dbReference type="SMR" id="A5CVV8"/>
<dbReference type="STRING" id="412965.COSY_0824"/>
<dbReference type="KEGG" id="vok:COSY_0824"/>
<dbReference type="eggNOG" id="COG0211">
    <property type="taxonomic scope" value="Bacteria"/>
</dbReference>
<dbReference type="HOGENOM" id="CLU_095424_4_0_6"/>
<dbReference type="OrthoDB" id="9803474at2"/>
<dbReference type="Proteomes" id="UP000000247">
    <property type="component" value="Chromosome"/>
</dbReference>
<dbReference type="GO" id="GO:0022625">
    <property type="term" value="C:cytosolic large ribosomal subunit"/>
    <property type="evidence" value="ECO:0007669"/>
    <property type="project" value="TreeGrafter"/>
</dbReference>
<dbReference type="GO" id="GO:0003735">
    <property type="term" value="F:structural constituent of ribosome"/>
    <property type="evidence" value="ECO:0007669"/>
    <property type="project" value="InterPro"/>
</dbReference>
<dbReference type="GO" id="GO:0006412">
    <property type="term" value="P:translation"/>
    <property type="evidence" value="ECO:0007669"/>
    <property type="project" value="UniProtKB-UniRule"/>
</dbReference>
<dbReference type="FunFam" id="2.40.50.100:FF:000020">
    <property type="entry name" value="50S ribosomal protein L27"/>
    <property type="match status" value="1"/>
</dbReference>
<dbReference type="Gene3D" id="2.40.50.100">
    <property type="match status" value="1"/>
</dbReference>
<dbReference type="HAMAP" id="MF_00539">
    <property type="entry name" value="Ribosomal_bL27"/>
    <property type="match status" value="1"/>
</dbReference>
<dbReference type="InterPro" id="IPR001684">
    <property type="entry name" value="Ribosomal_bL27"/>
</dbReference>
<dbReference type="InterPro" id="IPR018261">
    <property type="entry name" value="Ribosomal_bL27_CS"/>
</dbReference>
<dbReference type="NCBIfam" id="TIGR00062">
    <property type="entry name" value="L27"/>
    <property type="match status" value="1"/>
</dbReference>
<dbReference type="PANTHER" id="PTHR15893:SF0">
    <property type="entry name" value="LARGE RIBOSOMAL SUBUNIT PROTEIN BL27M"/>
    <property type="match status" value="1"/>
</dbReference>
<dbReference type="PANTHER" id="PTHR15893">
    <property type="entry name" value="RIBOSOMAL PROTEIN L27"/>
    <property type="match status" value="1"/>
</dbReference>
<dbReference type="Pfam" id="PF01016">
    <property type="entry name" value="Ribosomal_L27"/>
    <property type="match status" value="1"/>
</dbReference>
<dbReference type="PRINTS" id="PR00063">
    <property type="entry name" value="RIBOSOMALL27"/>
</dbReference>
<dbReference type="SUPFAM" id="SSF110324">
    <property type="entry name" value="Ribosomal L27 protein-like"/>
    <property type="match status" value="1"/>
</dbReference>
<dbReference type="PROSITE" id="PS00831">
    <property type="entry name" value="RIBOSOMAL_L27"/>
    <property type="match status" value="1"/>
</dbReference>